<reference key="1">
    <citation type="submission" date="2006-08" db="EMBL/GenBank/DDBJ databases">
        <title>Complete sequence of chromosome 1 of Burkholderia cenocepacia HI2424.</title>
        <authorList>
            <person name="Copeland A."/>
            <person name="Lucas S."/>
            <person name="Lapidus A."/>
            <person name="Barry K."/>
            <person name="Detter J.C."/>
            <person name="Glavina del Rio T."/>
            <person name="Hammon N."/>
            <person name="Israni S."/>
            <person name="Pitluck S."/>
            <person name="Chain P."/>
            <person name="Malfatti S."/>
            <person name="Shin M."/>
            <person name="Vergez L."/>
            <person name="Schmutz J."/>
            <person name="Larimer F."/>
            <person name="Land M."/>
            <person name="Hauser L."/>
            <person name="Kyrpides N."/>
            <person name="Kim E."/>
            <person name="LiPuma J.J."/>
            <person name="Gonzalez C.F."/>
            <person name="Konstantinidis K."/>
            <person name="Tiedje J.M."/>
            <person name="Richardson P."/>
        </authorList>
    </citation>
    <scope>NUCLEOTIDE SEQUENCE [LARGE SCALE GENOMIC DNA]</scope>
    <source>
        <strain>HI2424</strain>
    </source>
</reference>
<sequence length="632" mass="71182">MAHETMSFQAEVKQLLHLMIHSLYSNKEIFLRELVSNASDAADKLRFEGLADNALYENDPNLRIRIGYDKAARTITIDDNGIGMSRDEAIANLGTIARSGTKEFFTKLSGDQQKDAALIGQFGVGFYSGFIVADKITVETRRAGLPANEAVRWESAGEGDFTIDAIERAQRGTTITLHLREGEDDLLSSHRLKSIIQKYSDHIALPILMRKEEWDQEKGEMVLKDEDETVNQASALWTRSKSDVTDEQYTQFYQHIAHDHQDPLTWTHNRVEGRSEYTQLLFVPAHAPFDLWNRDYRGGLKLYVKRVFIMDDAEQLLPQYLRFVKGVVDSADLPLNVSREILQESRDVKAIREGVTKRALSMLEELANAEDDAGKEKYKTFWGAFGQVLKEGLGEDHANRERIAKLLRFASTHGDTDAQDVSLADYVSRMKPEQSKIYYVTADTWQAAKNSPHLEVFRKKGVEVLLLTDRVDEWMLSFLHEFDGKPLASVARGDLDLGELNDEEKKAQEQAGEAIKPVVEKMKEALGDKVKEVRVTFRLTDSPSCLVADDNDMSGYLQRMLKAAGQNAPAMQPILEINPEHALVKQLNADSADFGDWCHLLFDQALLAEGGMLDDPASFVKRTNALLLSRAA</sequence>
<protein>
    <recommendedName>
        <fullName evidence="1">Chaperone protein HtpG</fullName>
    </recommendedName>
    <alternativeName>
        <fullName evidence="1">Heat shock protein HtpG</fullName>
    </alternativeName>
    <alternativeName>
        <fullName evidence="1">High temperature protein G</fullName>
    </alternativeName>
</protein>
<name>HTPG_BURCH</name>
<gene>
    <name evidence="1" type="primary">htpG</name>
    <name type="ordered locus">Bcen2424_2347</name>
</gene>
<proteinExistence type="inferred from homology"/>
<feature type="chain" id="PRO_1000014899" description="Chaperone protein HtpG">
    <location>
        <begin position="1"/>
        <end position="632"/>
    </location>
</feature>
<feature type="region of interest" description="A; substrate-binding" evidence="1">
    <location>
        <begin position="1"/>
        <end position="339"/>
    </location>
</feature>
<feature type="region of interest" description="B" evidence="1">
    <location>
        <begin position="340"/>
        <end position="559"/>
    </location>
</feature>
<feature type="region of interest" description="C" evidence="1">
    <location>
        <begin position="560"/>
        <end position="632"/>
    </location>
</feature>
<evidence type="ECO:0000255" key="1">
    <source>
        <dbReference type="HAMAP-Rule" id="MF_00505"/>
    </source>
</evidence>
<keyword id="KW-0067">ATP-binding</keyword>
<keyword id="KW-0143">Chaperone</keyword>
<keyword id="KW-0963">Cytoplasm</keyword>
<keyword id="KW-0547">Nucleotide-binding</keyword>
<keyword id="KW-0346">Stress response</keyword>
<organism>
    <name type="scientific">Burkholderia cenocepacia (strain HI2424)</name>
    <dbReference type="NCBI Taxonomy" id="331272"/>
    <lineage>
        <taxon>Bacteria</taxon>
        <taxon>Pseudomonadati</taxon>
        <taxon>Pseudomonadota</taxon>
        <taxon>Betaproteobacteria</taxon>
        <taxon>Burkholderiales</taxon>
        <taxon>Burkholderiaceae</taxon>
        <taxon>Burkholderia</taxon>
        <taxon>Burkholderia cepacia complex</taxon>
    </lineage>
</organism>
<accession>A0K9C0</accession>
<dbReference type="EMBL" id="CP000458">
    <property type="protein sequence ID" value="ABK09097.1"/>
    <property type="molecule type" value="Genomic_DNA"/>
</dbReference>
<dbReference type="RefSeq" id="WP_011545883.1">
    <property type="nucleotide sequence ID" value="NC_008542.1"/>
</dbReference>
<dbReference type="SMR" id="A0K9C0"/>
<dbReference type="KEGG" id="bch:Bcen2424_2347"/>
<dbReference type="HOGENOM" id="CLU_006684_3_0_4"/>
<dbReference type="GO" id="GO:0005737">
    <property type="term" value="C:cytoplasm"/>
    <property type="evidence" value="ECO:0007669"/>
    <property type="project" value="UniProtKB-SubCell"/>
</dbReference>
<dbReference type="GO" id="GO:0005524">
    <property type="term" value="F:ATP binding"/>
    <property type="evidence" value="ECO:0007669"/>
    <property type="project" value="UniProtKB-UniRule"/>
</dbReference>
<dbReference type="GO" id="GO:0016887">
    <property type="term" value="F:ATP hydrolysis activity"/>
    <property type="evidence" value="ECO:0007669"/>
    <property type="project" value="InterPro"/>
</dbReference>
<dbReference type="GO" id="GO:0140662">
    <property type="term" value="F:ATP-dependent protein folding chaperone"/>
    <property type="evidence" value="ECO:0007669"/>
    <property type="project" value="InterPro"/>
</dbReference>
<dbReference type="GO" id="GO:0051082">
    <property type="term" value="F:unfolded protein binding"/>
    <property type="evidence" value="ECO:0007669"/>
    <property type="project" value="UniProtKB-UniRule"/>
</dbReference>
<dbReference type="CDD" id="cd16927">
    <property type="entry name" value="HATPase_Hsp90-like"/>
    <property type="match status" value="1"/>
</dbReference>
<dbReference type="FunFam" id="3.30.230.80:FF:000002">
    <property type="entry name" value="Molecular chaperone HtpG"/>
    <property type="match status" value="1"/>
</dbReference>
<dbReference type="FunFam" id="3.30.565.10:FF:000009">
    <property type="entry name" value="Molecular chaperone HtpG"/>
    <property type="match status" value="1"/>
</dbReference>
<dbReference type="Gene3D" id="3.30.230.80">
    <property type="match status" value="1"/>
</dbReference>
<dbReference type="Gene3D" id="3.40.50.11260">
    <property type="match status" value="1"/>
</dbReference>
<dbReference type="Gene3D" id="1.20.120.790">
    <property type="entry name" value="Heat shock protein 90, C-terminal domain"/>
    <property type="match status" value="1"/>
</dbReference>
<dbReference type="Gene3D" id="3.30.565.10">
    <property type="entry name" value="Histidine kinase-like ATPase, C-terminal domain"/>
    <property type="match status" value="1"/>
</dbReference>
<dbReference type="HAMAP" id="MF_00505">
    <property type="entry name" value="HSP90"/>
    <property type="match status" value="1"/>
</dbReference>
<dbReference type="InterPro" id="IPR036890">
    <property type="entry name" value="HATPase_C_sf"/>
</dbReference>
<dbReference type="InterPro" id="IPR019805">
    <property type="entry name" value="Heat_shock_protein_90_CS"/>
</dbReference>
<dbReference type="InterPro" id="IPR037196">
    <property type="entry name" value="HSP90_C"/>
</dbReference>
<dbReference type="InterPro" id="IPR001404">
    <property type="entry name" value="Hsp90_fam"/>
</dbReference>
<dbReference type="InterPro" id="IPR020575">
    <property type="entry name" value="Hsp90_N"/>
</dbReference>
<dbReference type="InterPro" id="IPR020568">
    <property type="entry name" value="Ribosomal_Su5_D2-typ_SF"/>
</dbReference>
<dbReference type="NCBIfam" id="NF003555">
    <property type="entry name" value="PRK05218.1"/>
    <property type="match status" value="1"/>
</dbReference>
<dbReference type="PANTHER" id="PTHR11528">
    <property type="entry name" value="HEAT SHOCK PROTEIN 90 FAMILY MEMBER"/>
    <property type="match status" value="1"/>
</dbReference>
<dbReference type="Pfam" id="PF13589">
    <property type="entry name" value="HATPase_c_3"/>
    <property type="match status" value="1"/>
</dbReference>
<dbReference type="Pfam" id="PF00183">
    <property type="entry name" value="HSP90"/>
    <property type="match status" value="1"/>
</dbReference>
<dbReference type="PIRSF" id="PIRSF002583">
    <property type="entry name" value="Hsp90"/>
    <property type="match status" value="1"/>
</dbReference>
<dbReference type="PRINTS" id="PR00775">
    <property type="entry name" value="HEATSHOCK90"/>
</dbReference>
<dbReference type="SMART" id="SM00387">
    <property type="entry name" value="HATPase_c"/>
    <property type="match status" value="1"/>
</dbReference>
<dbReference type="SUPFAM" id="SSF55874">
    <property type="entry name" value="ATPase domain of HSP90 chaperone/DNA topoisomerase II/histidine kinase"/>
    <property type="match status" value="1"/>
</dbReference>
<dbReference type="SUPFAM" id="SSF110942">
    <property type="entry name" value="HSP90 C-terminal domain"/>
    <property type="match status" value="1"/>
</dbReference>
<dbReference type="SUPFAM" id="SSF54211">
    <property type="entry name" value="Ribosomal protein S5 domain 2-like"/>
    <property type="match status" value="1"/>
</dbReference>
<dbReference type="PROSITE" id="PS00298">
    <property type="entry name" value="HSP90"/>
    <property type="match status" value="1"/>
</dbReference>
<comment type="function">
    <text evidence="1">Molecular chaperone. Has ATPase activity.</text>
</comment>
<comment type="subunit">
    <text evidence="1">Homodimer.</text>
</comment>
<comment type="subcellular location">
    <subcellularLocation>
        <location evidence="1">Cytoplasm</location>
    </subcellularLocation>
</comment>
<comment type="similarity">
    <text evidence="1">Belongs to the heat shock protein 90 family.</text>
</comment>